<name>MMM1_MALGO</name>
<feature type="chain" id="PRO_0000384236" description="Maintenance of mitochondrial morphology protein 1">
    <location>
        <begin position="1"/>
        <end position="380"/>
    </location>
</feature>
<feature type="topological domain" description="Lumenal" evidence="1">
    <location>
        <begin position="1"/>
        <end position="64"/>
    </location>
</feature>
<feature type="transmembrane region" description="Helical" evidence="1">
    <location>
        <begin position="65"/>
        <end position="85"/>
    </location>
</feature>
<feature type="topological domain" description="Cytoplasmic" evidence="1">
    <location>
        <begin position="86"/>
        <end position="380"/>
    </location>
</feature>
<feature type="domain" description="SMP-LTD" evidence="1">
    <location>
        <begin position="147"/>
        <end position="369"/>
    </location>
</feature>
<evidence type="ECO:0000255" key="1">
    <source>
        <dbReference type="HAMAP-Rule" id="MF_03103"/>
    </source>
</evidence>
<evidence type="ECO:0000305" key="2"/>
<keyword id="KW-0256">Endoplasmic reticulum</keyword>
<keyword id="KW-0445">Lipid transport</keyword>
<keyword id="KW-0446">Lipid-binding</keyword>
<keyword id="KW-0472">Membrane</keyword>
<keyword id="KW-1185">Reference proteome</keyword>
<keyword id="KW-0812">Transmembrane</keyword>
<keyword id="KW-1133">Transmembrane helix</keyword>
<keyword id="KW-0813">Transport</keyword>
<comment type="function">
    <text evidence="1">Component of the ERMES/MDM complex, which serves as a molecular tether to connect the endoplasmic reticulum (ER) and mitochondria. Components of this complex are involved in the control of mitochondrial shape and protein biogenesis, and function in nonvesicular lipid trafficking between the ER and mitochondria. The MDM12-MMM1 subcomplex functions in the major beta-barrel assembly pathway that is responsible for biogenesis of all outer membrane beta-barrel proteins, and acts in a late step after the SAM complex. The MDM10-MDM12-MMM1 subcomplex further acts in the TOM40-specific pathway after the action of the MDM12-MMM1 complex. Essential for establishing and maintaining the structure of mitochondria and maintenance of mtDNA nucleoids.</text>
</comment>
<comment type="subunit">
    <text evidence="1">Homodimer. Component of the ER-mitochondria encounter structure (ERMES) or MDM complex, composed of MMM1, MDM10, MDM12 and MDM34. A MMM1 homodimer associates with one molecule of MDM12 on each side in a pairwise head-to-tail manner, and the SMP-LTD domains of MMM1 and MDM12 generate a continuous hydrophobic tunnel for phospholipid trafficking.</text>
</comment>
<comment type="subcellular location">
    <subcellularLocation>
        <location evidence="1">Endoplasmic reticulum membrane</location>
        <topology evidence="1">Single-pass type I membrane protein</topology>
    </subcellularLocation>
    <text evidence="1">The ERMES/MDM complex localizes to a few discrete foci (around 10 per single cell), that represent mitochondria-endoplasmic reticulum junctions. These foci are often found next to mtDNA nucleoids.</text>
</comment>
<comment type="domain">
    <text evidence="1">The SMP-LTD domain is a barrel-like domain that can bind various types of glycerophospholipids in its interior and mediate their transfer between two adjacent bilayers.</text>
</comment>
<comment type="similarity">
    <text evidence="1">Belongs to the MMM1 family.</text>
</comment>
<comment type="sequence caution" evidence="2">
    <conflict type="erroneous initiation">
        <sequence resource="EMBL-CDS" id="EDP45129"/>
    </conflict>
</comment>
<organism>
    <name type="scientific">Malassezia globosa (strain ATCC MYA-4612 / CBS 7966)</name>
    <name type="common">Dandruff-associated fungus</name>
    <dbReference type="NCBI Taxonomy" id="425265"/>
    <lineage>
        <taxon>Eukaryota</taxon>
        <taxon>Fungi</taxon>
        <taxon>Dikarya</taxon>
        <taxon>Basidiomycota</taxon>
        <taxon>Ustilaginomycotina</taxon>
        <taxon>Malasseziomycetes</taxon>
        <taxon>Malasseziales</taxon>
        <taxon>Malasseziaceae</taxon>
        <taxon>Malassezia</taxon>
    </lineage>
</organism>
<reference key="1">
    <citation type="journal article" date="2007" name="Proc. Natl. Acad. Sci. U.S.A.">
        <title>Dandruff-associated Malassezia genomes reveal convergent and divergent virulence traits shared with plant and human fungal pathogens.</title>
        <authorList>
            <person name="Xu J."/>
            <person name="Saunders C.W."/>
            <person name="Hu P."/>
            <person name="Grant R.A."/>
            <person name="Boekhout T."/>
            <person name="Kuramae E.E."/>
            <person name="Kronstad J.W."/>
            <person name="DeAngelis Y.M."/>
            <person name="Reeder N.L."/>
            <person name="Johnstone K.R."/>
            <person name="Leland M."/>
            <person name="Fieno A.M."/>
            <person name="Begley W.M."/>
            <person name="Sun Y."/>
            <person name="Lacey M.P."/>
            <person name="Chaudhary T."/>
            <person name="Keough T."/>
            <person name="Chu L."/>
            <person name="Sears R."/>
            <person name="Yuan B."/>
            <person name="Dawson T.L. Jr."/>
        </authorList>
    </citation>
    <scope>NUCLEOTIDE SEQUENCE [LARGE SCALE GENOMIC DNA]</scope>
    <source>
        <strain>ATCC MYA-4612 / CBS 7966</strain>
    </source>
</reference>
<proteinExistence type="inferred from homology"/>
<dbReference type="EMBL" id="AAYY01000001">
    <property type="protein sequence ID" value="EDP45129.1"/>
    <property type="status" value="ALT_INIT"/>
    <property type="molecule type" value="Genomic_DNA"/>
</dbReference>
<dbReference type="RefSeq" id="XP_001732343.1">
    <property type="nucleotide sequence ID" value="XM_001732291.1"/>
</dbReference>
<dbReference type="SMR" id="A8PRS6"/>
<dbReference type="FunCoup" id="A8PRS6">
    <property type="interactions" value="68"/>
</dbReference>
<dbReference type="STRING" id="425265.A8PRS6"/>
<dbReference type="GeneID" id="5856649"/>
<dbReference type="KEGG" id="mgl:MGL_0118"/>
<dbReference type="VEuPathDB" id="FungiDB:MGL_0118"/>
<dbReference type="InParanoid" id="A8PRS6"/>
<dbReference type="OrthoDB" id="5599157at2759"/>
<dbReference type="Proteomes" id="UP000008837">
    <property type="component" value="Unassembled WGS sequence"/>
</dbReference>
<dbReference type="GO" id="GO:0005789">
    <property type="term" value="C:endoplasmic reticulum membrane"/>
    <property type="evidence" value="ECO:0007669"/>
    <property type="project" value="UniProtKB-SubCell"/>
</dbReference>
<dbReference type="GO" id="GO:0032865">
    <property type="term" value="C:ERMES complex"/>
    <property type="evidence" value="ECO:0007669"/>
    <property type="project" value="UniProtKB-UniRule"/>
</dbReference>
<dbReference type="GO" id="GO:0008289">
    <property type="term" value="F:lipid binding"/>
    <property type="evidence" value="ECO:0007669"/>
    <property type="project" value="UniProtKB-KW"/>
</dbReference>
<dbReference type="GO" id="GO:0000002">
    <property type="term" value="P:mitochondrial genome maintenance"/>
    <property type="evidence" value="ECO:0007669"/>
    <property type="project" value="UniProtKB-UniRule"/>
</dbReference>
<dbReference type="GO" id="GO:1990456">
    <property type="term" value="P:mitochondrion-endoplasmic reticulum membrane tethering"/>
    <property type="evidence" value="ECO:0007669"/>
    <property type="project" value="TreeGrafter"/>
</dbReference>
<dbReference type="GO" id="GO:0015914">
    <property type="term" value="P:phospholipid transport"/>
    <property type="evidence" value="ECO:0007669"/>
    <property type="project" value="TreeGrafter"/>
</dbReference>
<dbReference type="GO" id="GO:0045040">
    <property type="term" value="P:protein insertion into mitochondrial outer membrane"/>
    <property type="evidence" value="ECO:0007669"/>
    <property type="project" value="UniProtKB-UniRule"/>
</dbReference>
<dbReference type="CDD" id="cd21671">
    <property type="entry name" value="SMP_Mmm1"/>
    <property type="match status" value="1"/>
</dbReference>
<dbReference type="HAMAP" id="MF_03103">
    <property type="entry name" value="Mmm1"/>
    <property type="match status" value="1"/>
</dbReference>
<dbReference type="InterPro" id="IPR027537">
    <property type="entry name" value="Mmm1"/>
</dbReference>
<dbReference type="InterPro" id="IPR019411">
    <property type="entry name" value="MMM1_dom"/>
</dbReference>
<dbReference type="InterPro" id="IPR031468">
    <property type="entry name" value="SMP_LBD"/>
</dbReference>
<dbReference type="PANTHER" id="PTHR13466:SF0">
    <property type="entry name" value="SMP-LTD DOMAIN-CONTAINING PROTEIN"/>
    <property type="match status" value="1"/>
</dbReference>
<dbReference type="PANTHER" id="PTHR13466">
    <property type="entry name" value="TEX2 PROTEIN-RELATED"/>
    <property type="match status" value="1"/>
</dbReference>
<dbReference type="Pfam" id="PF10296">
    <property type="entry name" value="MMM1"/>
    <property type="match status" value="2"/>
</dbReference>
<dbReference type="PROSITE" id="PS51847">
    <property type="entry name" value="SMP"/>
    <property type="match status" value="1"/>
</dbReference>
<protein>
    <recommendedName>
        <fullName evidence="1">Maintenance of mitochondrial morphology protein 1</fullName>
    </recommendedName>
</protein>
<gene>
    <name evidence="1" type="primary">MMM1</name>
    <name type="ORF">MGL_0118</name>
</gene>
<sequence length="380" mass="42480">MQGRAIWAEGPIHSFDLPSSSLERGGQALKSGASKTHAYMDEEVGTSTAEAWTWIVPSLSFIQGFMAGQAVLLMLFLGLFRYFFMTSSPGTRAQQQADLLQRVHAVRTSMDMRSHVPPYARVPYEQGVQACVQDLLSQVRYDPSEHAPESLDWLNVLVAQLLMSYRMSILNAGMCAGRNEDMDEPALPSTANAEKTAAKLALERVLNEAMQGRATKHFLDRLVVTDIDMGCRYPTFSHARVRPALHAKSTLVEIDFEYMDALTLGIDTRMWLHFPQWRFGSLAANLCMRVERFAGTLVLEIGTLPEPTPVQARVCLHPNFVLDAHLSTILGSKSKLQDVPKIEELFLARLRSWLEHNVVWPHFWHIPLPGIGTSPADPLA</sequence>
<accession>A8PRS6</accession>